<gene>
    <name evidence="5" type="primary">VIR1</name>
    <name evidence="8" type="ordered locus">YGL036W</name>
</gene>
<proteinExistence type="evidence at protein level"/>
<comment type="function">
    <text evidence="4">Component of the MIS complex, a complex that mediates N6-methyladenosine (m6A) methylation of meiotic mRNAs and is required for initiation of meiosis, progression through the meiotic divisions and sporulation (PubMed:36930734). In the complex, performs a scaffolding role stabilizing the other complex members (PubMed:36930734).</text>
</comment>
<comment type="subunit">
    <text evidence="4">Component of the MIS (mRNA N6-methyladenosine (m6A) methylation) complex, at least composed of IME4, KAR4, MUM2, SLZ1, and VIR1 (PubMed:36930734). Interacts with KAR4 (PubMed:36930734). Interacts with SLZ1 (PubMed:36930734). Interacts with MUM2 (PubMed:36930734). Interacts with IME4 (PubMed:36930734).</text>
</comment>
<comment type="interaction">
    <interactant intactId="EBI-11537">
        <id>P53185</id>
    </interactant>
    <interactant intactId="EBI-11619">
        <id>P38236</id>
        <label>MUM2</label>
    </interactant>
    <organismsDiffer>false</organismsDiffer>
    <experiments>3</experiments>
</comment>
<comment type="subcellular location">
    <subcellularLocation>
        <location evidence="2">Cytoplasm</location>
    </subcellularLocation>
    <subcellularLocation>
        <location evidence="7">Nucleus</location>
        <location evidence="7">Nucleolus</location>
    </subcellularLocation>
</comment>
<comment type="disruption phenotype">
    <text evidence="4">Severely decreases N6-methyladenosine (m6A) levels following meiotic induction (PubMed:36930734). Abnormal cell cycle arrest in meiotic interphase before premeiotic DNA replication (PubMed:36930734). Increases the rate of degradation of KAR4, MUM2 and IME4 protein (PubMed:36930734). Increases RME1 protein levels, and decreases IME1 transcript levels (PubMed:36930734). Decreases RNA level of genes involved in translation and ribosome biogenesis, and early meiotic genes (PubMed:36930734). Partially suppressed by disruption of RME1 (PubMed:36930734).</text>
</comment>
<comment type="miscellaneous">
    <text evidence="3">Present with 486 molecules/cell in log phase SD medium.</text>
</comment>
<comment type="similarity">
    <text evidence="6">Belongs to the vir family.</text>
</comment>
<accession>P53185</accession>
<accession>D6VUA3</accession>
<evidence type="ECO:0000256" key="1">
    <source>
        <dbReference type="SAM" id="MobiDB-lite"/>
    </source>
</evidence>
<evidence type="ECO:0000269" key="2">
    <source>
    </source>
</evidence>
<evidence type="ECO:0000269" key="3">
    <source>
    </source>
</evidence>
<evidence type="ECO:0000269" key="4">
    <source>
    </source>
</evidence>
<evidence type="ECO:0000303" key="5">
    <source>
    </source>
</evidence>
<evidence type="ECO:0000305" key="6"/>
<evidence type="ECO:0000305" key="7">
    <source>
    </source>
</evidence>
<evidence type="ECO:0000312" key="8">
    <source>
        <dbReference type="SGD" id="S000003004"/>
    </source>
</evidence>
<evidence type="ECO:0007744" key="9">
    <source>
    </source>
</evidence>
<sequence>MQKCAGHAPLVTAASRVSQDTVDALLQAILKAYHKLASIDSHINDPVEIAFKLINSFKYLPISGSSVKDFESELRELDVFSPLLQSAVTAANNSNIIWDLIAVLFAYISIHKQLHPLILHNLNIWKDFMADNDEETATTTDGDSMNFGVLSLLSIVQNFEEITPNLFEFLKLGLRSTLLKIWVAQWQRYDPSATNLINGDEKISSWITKDYQVDFFIITSLASTSSLEVLPSHYFVYKISKRISHFPNLIDPKLYRSAISTIMENGISDNGGGENSSDKIDPTDLSFHLQVLMEVIDHPELNYLQENRLILLLDIALNYLILVPTHCLHSNFGELGSTQSLASTLNIIQFLLSKFLINMGSISQLINQYNRKCITTNNINNNNINNNGVINGSTNTTSTTTTTITNNNNNSNNSSISNNNRKIDWTQSYQTRYQIPYWFEDSILPPIPPISKSLFTFDKNLDHESDSIMIVNDVLRCLNLTILLISKLLRDYDDLKINPLIQSSDDHSNEDNHVIIEQYMQLYLVPLFTSLLLAQQLKDRGQERDEGHKEKEENINLIGSSSVKKLFSQLIFFSSLKLCENLVIKEKNLALYHLIKFATKVSLDDLILQKISINLLNHLFFHQIRDGSDDDNLIKKLCLKNQLSFQALKDYITLWNDGSEVYNAFYKELFYEEQPKIKPIKLTTSDLLKLFPEDVQFVISTPPNTITSASTSDNCTSSQSAAQKNIENFTTLSKYDVYSSTSFIPSTSKNTNTNVSKQQQQPQNSTPCSSNRFLFNKSSLISQESNGSNNNSGTQGPGSMNESYSLDNSFNTTNTNMTRQPTTLTRATDAMTTAPTTPIPYKNTSGSSNNNLWIESPMTNFKGSTISKSTNKSKMVNTGKNYILGGHNKVKNNSRAQSIHIDDFENENN</sequence>
<reference key="1">
    <citation type="journal article" date="1997" name="Nature">
        <title>The nucleotide sequence of Saccharomyces cerevisiae chromosome VII.</title>
        <authorList>
            <person name="Tettelin H."/>
            <person name="Agostoni-Carbone M.L."/>
            <person name="Albermann K."/>
            <person name="Albers M."/>
            <person name="Arroyo J."/>
            <person name="Backes U."/>
            <person name="Barreiros T."/>
            <person name="Bertani I."/>
            <person name="Bjourson A.J."/>
            <person name="Brueckner M."/>
            <person name="Bruschi C.V."/>
            <person name="Carignani G."/>
            <person name="Castagnoli L."/>
            <person name="Cerdan E."/>
            <person name="Clemente M.L."/>
            <person name="Coblenz A."/>
            <person name="Coglievina M."/>
            <person name="Coissac E."/>
            <person name="Defoor E."/>
            <person name="Del Bino S."/>
            <person name="Delius H."/>
            <person name="Delneri D."/>
            <person name="de Wergifosse P."/>
            <person name="Dujon B."/>
            <person name="Durand P."/>
            <person name="Entian K.-D."/>
            <person name="Eraso P."/>
            <person name="Escribano V."/>
            <person name="Fabiani L."/>
            <person name="Fartmann B."/>
            <person name="Feroli F."/>
            <person name="Feuermann M."/>
            <person name="Frontali L."/>
            <person name="Garcia-Gonzalez M."/>
            <person name="Garcia-Saez M.I."/>
            <person name="Goffeau A."/>
            <person name="Guerreiro P."/>
            <person name="Hani J."/>
            <person name="Hansen M."/>
            <person name="Hebling U."/>
            <person name="Hernandez K."/>
            <person name="Heumann K."/>
            <person name="Hilger F."/>
            <person name="Hofmann B."/>
            <person name="Indge K.J."/>
            <person name="James C.M."/>
            <person name="Klima R."/>
            <person name="Koetter P."/>
            <person name="Kramer B."/>
            <person name="Kramer W."/>
            <person name="Lauquin G."/>
            <person name="Leuther H."/>
            <person name="Louis E.J."/>
            <person name="Maillier E."/>
            <person name="Marconi A."/>
            <person name="Martegani E."/>
            <person name="Mazon M.J."/>
            <person name="Mazzoni C."/>
            <person name="McReynolds A.D.K."/>
            <person name="Melchioretto P."/>
            <person name="Mewes H.-W."/>
            <person name="Minenkova O."/>
            <person name="Mueller-Auer S."/>
            <person name="Nawrocki A."/>
            <person name="Netter P."/>
            <person name="Neu R."/>
            <person name="Nombela C."/>
            <person name="Oliver S.G."/>
            <person name="Panzeri L."/>
            <person name="Paoluzi S."/>
            <person name="Plevani P."/>
            <person name="Portetelle D."/>
            <person name="Portillo F."/>
            <person name="Potier S."/>
            <person name="Purnelle B."/>
            <person name="Rieger M."/>
            <person name="Riles L."/>
            <person name="Rinaldi T."/>
            <person name="Robben J."/>
            <person name="Rodrigues-Pousada C."/>
            <person name="Rodriguez-Belmonte E."/>
            <person name="Rodriguez-Torres A.M."/>
            <person name="Rose M."/>
            <person name="Ruzzi M."/>
            <person name="Saliola M."/>
            <person name="Sanchez-Perez M."/>
            <person name="Schaefer B."/>
            <person name="Schaefer M."/>
            <person name="Scharfe M."/>
            <person name="Schmidheini T."/>
            <person name="Schreer A."/>
            <person name="Skala J."/>
            <person name="Souciet J.-L."/>
            <person name="Steensma H.Y."/>
            <person name="Talla E."/>
            <person name="Thierry A."/>
            <person name="Vandenbol M."/>
            <person name="van der Aart Q.J.M."/>
            <person name="Van Dyck L."/>
            <person name="Vanoni M."/>
            <person name="Verhasselt P."/>
            <person name="Voet M."/>
            <person name="Volckaert G."/>
            <person name="Wambutt R."/>
            <person name="Watson M.D."/>
            <person name="Weber N."/>
            <person name="Wedler E."/>
            <person name="Wedler H."/>
            <person name="Wipfli P."/>
            <person name="Wolf K."/>
            <person name="Wright L.F."/>
            <person name="Zaccaria P."/>
            <person name="Zimmermann M."/>
            <person name="Zollner A."/>
            <person name="Kleine K."/>
        </authorList>
    </citation>
    <scope>NUCLEOTIDE SEQUENCE [LARGE SCALE GENOMIC DNA]</scope>
    <source>
        <strain>ATCC 204508 / S288c</strain>
    </source>
</reference>
<reference key="2">
    <citation type="journal article" date="2014" name="G3 (Bethesda)">
        <title>The reference genome sequence of Saccharomyces cerevisiae: Then and now.</title>
        <authorList>
            <person name="Engel S.R."/>
            <person name="Dietrich F.S."/>
            <person name="Fisk D.G."/>
            <person name="Binkley G."/>
            <person name="Balakrishnan R."/>
            <person name="Costanzo M.C."/>
            <person name="Dwight S.S."/>
            <person name="Hitz B.C."/>
            <person name="Karra K."/>
            <person name="Nash R.S."/>
            <person name="Weng S."/>
            <person name="Wong E.D."/>
            <person name="Lloyd P."/>
            <person name="Skrzypek M.S."/>
            <person name="Miyasato S.R."/>
            <person name="Simison M."/>
            <person name="Cherry J.M."/>
        </authorList>
    </citation>
    <scope>GENOME REANNOTATION</scope>
    <source>
        <strain>ATCC 204508 / S288c</strain>
    </source>
</reference>
<reference key="3">
    <citation type="journal article" date="2003" name="Nature">
        <title>Global analysis of protein localization in budding yeast.</title>
        <authorList>
            <person name="Huh W.-K."/>
            <person name="Falvo J.V."/>
            <person name="Gerke L.C."/>
            <person name="Carroll A.S."/>
            <person name="Howson R.W."/>
            <person name="Weissman J.S."/>
            <person name="O'Shea E.K."/>
        </authorList>
    </citation>
    <scope>SUBCELLULAR LOCATION [LARGE SCALE ANALYSIS]</scope>
</reference>
<reference key="4">
    <citation type="journal article" date="2003" name="Nature">
        <title>Global analysis of protein expression in yeast.</title>
        <authorList>
            <person name="Ghaemmaghami S."/>
            <person name="Huh W.-K."/>
            <person name="Bower K."/>
            <person name="Howson R.W."/>
            <person name="Belle A."/>
            <person name="Dephoure N."/>
            <person name="O'Shea E.K."/>
            <person name="Weissman J.S."/>
        </authorList>
    </citation>
    <scope>LEVEL OF PROTEIN EXPRESSION [LARGE SCALE ANALYSIS]</scope>
</reference>
<reference key="5">
    <citation type="journal article" date="2009" name="Science">
        <title>Global analysis of Cdk1 substrate phosphorylation sites provides insights into evolution.</title>
        <authorList>
            <person name="Holt L.J."/>
            <person name="Tuch B.B."/>
            <person name="Villen J."/>
            <person name="Johnson A.D."/>
            <person name="Gygi S.P."/>
            <person name="Morgan D.O."/>
        </authorList>
    </citation>
    <scope>PHOSPHORYLATION [LARGE SCALE ANALYSIS] AT SER-856 AND SER-898</scope>
    <scope>IDENTIFICATION BY MASS SPECTROMETRY [LARGE SCALE ANALYSIS]</scope>
</reference>
<reference key="6">
    <citation type="journal article" date="2023" name="Genetics">
        <title>Vir1p, the yeast homolog of virilizer, is required for mRNA m6A methylation and meiosis.</title>
        <authorList>
            <person name="Park Z.M."/>
            <person name="Belnap E."/>
            <person name="Remillard M."/>
            <person name="Rose M.D."/>
        </authorList>
    </citation>
    <scope>FUNCTION</scope>
    <scope>IDENTIFICATION IN THE MIS COMPLEX</scope>
    <scope>INTERACTION WITH KAR4; SLZ1; MUM2 AND IME4</scope>
    <scope>SUBCELLULAR LOCATION</scope>
    <scope>IDENTIFICATION BY MASS SPECTROMETRY</scope>
    <scope>DISRUPTION PHENOTYPE</scope>
</reference>
<organism>
    <name type="scientific">Saccharomyces cerevisiae (strain ATCC 204508 / S288c)</name>
    <name type="common">Baker's yeast</name>
    <dbReference type="NCBI Taxonomy" id="559292"/>
    <lineage>
        <taxon>Eukaryota</taxon>
        <taxon>Fungi</taxon>
        <taxon>Dikarya</taxon>
        <taxon>Ascomycota</taxon>
        <taxon>Saccharomycotina</taxon>
        <taxon>Saccharomycetes</taxon>
        <taxon>Saccharomycetales</taxon>
        <taxon>Saccharomycetaceae</taxon>
        <taxon>Saccharomyces</taxon>
    </lineage>
</organism>
<keyword id="KW-0963">Cytoplasm</keyword>
<keyword id="KW-0539">Nucleus</keyword>
<keyword id="KW-0597">Phosphoprotein</keyword>
<keyword id="KW-1185">Reference proteome</keyword>
<name>VIR_YEAST</name>
<feature type="chain" id="PRO_0000096613" description="Protein virilizer">
    <location>
        <begin position="1"/>
        <end position="909"/>
    </location>
</feature>
<feature type="region of interest" description="Disordered" evidence="1">
    <location>
        <begin position="746"/>
        <end position="824"/>
    </location>
</feature>
<feature type="compositionally biased region" description="Polar residues" evidence="1">
    <location>
        <begin position="746"/>
        <end position="784"/>
    </location>
</feature>
<feature type="compositionally biased region" description="Low complexity" evidence="1">
    <location>
        <begin position="785"/>
        <end position="799"/>
    </location>
</feature>
<feature type="compositionally biased region" description="Polar residues" evidence="1">
    <location>
        <begin position="800"/>
        <end position="810"/>
    </location>
</feature>
<feature type="compositionally biased region" description="Low complexity" evidence="1">
    <location>
        <begin position="811"/>
        <end position="824"/>
    </location>
</feature>
<feature type="modified residue" description="Phosphoserine" evidence="9">
    <location>
        <position position="856"/>
    </location>
</feature>
<feature type="modified residue" description="Phosphoserine" evidence="9">
    <location>
        <position position="898"/>
    </location>
</feature>
<dbReference type="EMBL" id="Z72558">
    <property type="protein sequence ID" value="CAA96738.1"/>
    <property type="molecule type" value="Genomic_DNA"/>
</dbReference>
<dbReference type="EMBL" id="Z72557">
    <property type="protein sequence ID" value="CAA96737.1"/>
    <property type="molecule type" value="Genomic_DNA"/>
</dbReference>
<dbReference type="EMBL" id="BK006941">
    <property type="protein sequence ID" value="DAA08064.1"/>
    <property type="molecule type" value="Genomic_DNA"/>
</dbReference>
<dbReference type="PIR" id="S64038">
    <property type="entry name" value="S64038"/>
</dbReference>
<dbReference type="RefSeq" id="NP_011479.1">
    <property type="nucleotide sequence ID" value="NM_001180901.1"/>
</dbReference>
<dbReference type="SMR" id="P53185"/>
<dbReference type="BioGRID" id="33211">
    <property type="interactions" value="201"/>
</dbReference>
<dbReference type="ComplexPortal" id="CPX-3211">
    <property type="entry name" value="MIS complex"/>
</dbReference>
<dbReference type="DIP" id="DIP-4981N"/>
<dbReference type="FunCoup" id="P53185">
    <property type="interactions" value="149"/>
</dbReference>
<dbReference type="IntAct" id="P53185">
    <property type="interactions" value="8"/>
</dbReference>
<dbReference type="STRING" id="4932.YGL036W"/>
<dbReference type="iPTMnet" id="P53185"/>
<dbReference type="PaxDb" id="4932-YGL036W"/>
<dbReference type="PeptideAtlas" id="P53185"/>
<dbReference type="EnsemblFungi" id="YGL036W_mRNA">
    <property type="protein sequence ID" value="YGL036W"/>
    <property type="gene ID" value="YGL036W"/>
</dbReference>
<dbReference type="GeneID" id="852847"/>
<dbReference type="KEGG" id="sce:YGL036W"/>
<dbReference type="AGR" id="SGD:S000003004"/>
<dbReference type="SGD" id="S000003004">
    <property type="gene designation" value="VIR1"/>
</dbReference>
<dbReference type="VEuPathDB" id="FungiDB:YGL036W"/>
<dbReference type="eggNOG" id="ENOG502QWIZ">
    <property type="taxonomic scope" value="Eukaryota"/>
</dbReference>
<dbReference type="HOGENOM" id="CLU_360944_0_0_1"/>
<dbReference type="InParanoid" id="P53185"/>
<dbReference type="OMA" id="NYILGGH"/>
<dbReference type="OrthoDB" id="4069217at2759"/>
<dbReference type="BioCyc" id="YEAST:G3O-30551-MONOMER"/>
<dbReference type="BioGRID-ORCS" id="852847">
    <property type="hits" value="0 hits in 10 CRISPR screens"/>
</dbReference>
<dbReference type="PRO" id="PR:P53185"/>
<dbReference type="Proteomes" id="UP000002311">
    <property type="component" value="Chromosome VII"/>
</dbReference>
<dbReference type="RNAct" id="P53185">
    <property type="molecule type" value="protein"/>
</dbReference>
<dbReference type="GO" id="GO:0005737">
    <property type="term" value="C:cytoplasm"/>
    <property type="evidence" value="ECO:0007005"/>
    <property type="project" value="SGD"/>
</dbReference>
<dbReference type="GO" id="GO:0016592">
    <property type="term" value="C:mediator complex"/>
    <property type="evidence" value="ECO:0000318"/>
    <property type="project" value="GO_Central"/>
</dbReference>
<dbReference type="GO" id="GO:0005730">
    <property type="term" value="C:nucleolus"/>
    <property type="evidence" value="ECO:0007669"/>
    <property type="project" value="UniProtKB-SubCell"/>
</dbReference>
<dbReference type="GO" id="GO:0036396">
    <property type="term" value="C:RNA N6-methyladenosine methyltransferase complex"/>
    <property type="evidence" value="ECO:0000315"/>
    <property type="project" value="SGD"/>
</dbReference>
<dbReference type="GO" id="GO:0005667">
    <property type="term" value="C:transcription regulator complex"/>
    <property type="evidence" value="ECO:0000318"/>
    <property type="project" value="GO_Central"/>
</dbReference>
<dbReference type="GO" id="GO:0051321">
    <property type="term" value="P:meiotic cell cycle"/>
    <property type="evidence" value="ECO:0000315"/>
    <property type="project" value="SGD"/>
</dbReference>
<dbReference type="GO" id="GO:0045944">
    <property type="term" value="P:positive regulation of transcription by RNA polymerase II"/>
    <property type="evidence" value="ECO:0000318"/>
    <property type="project" value="GO_Central"/>
</dbReference>
<dbReference type="InterPro" id="IPR054776">
    <property type="entry name" value="VIR1_yeast"/>
</dbReference>
<dbReference type="PANTHER" id="PTHR12433">
    <property type="entry name" value="MEDIATOR OF RNA POLYMERASE II TRANSCRIPTION SUBUNIT 25"/>
    <property type="match status" value="1"/>
</dbReference>
<dbReference type="PANTHER" id="PTHR12433:SF11">
    <property type="entry name" value="MEDIATOR OF RNA POLYMERASE II TRANSCRIPTION SUBUNIT 25"/>
    <property type="match status" value="1"/>
</dbReference>
<dbReference type="Pfam" id="PF22575">
    <property type="entry name" value="Vir1p"/>
    <property type="match status" value="1"/>
</dbReference>
<protein>
    <recommendedName>
        <fullName evidence="5">Protein virilizer</fullName>
    </recommendedName>
</protein>